<evidence type="ECO:0000250" key="1">
    <source>
        <dbReference type="UniProtKB" id="Q14232"/>
    </source>
</evidence>
<evidence type="ECO:0000250" key="2">
    <source>
        <dbReference type="UniProtKB" id="Q9USP0"/>
    </source>
</evidence>
<evidence type="ECO:0000305" key="3"/>
<organism>
    <name type="scientific">Pongo abelii</name>
    <name type="common">Sumatran orangutan</name>
    <name type="synonym">Pongo pygmaeus abelii</name>
    <dbReference type="NCBI Taxonomy" id="9601"/>
    <lineage>
        <taxon>Eukaryota</taxon>
        <taxon>Metazoa</taxon>
        <taxon>Chordata</taxon>
        <taxon>Craniata</taxon>
        <taxon>Vertebrata</taxon>
        <taxon>Euteleostomi</taxon>
        <taxon>Mammalia</taxon>
        <taxon>Eutheria</taxon>
        <taxon>Euarchontoglires</taxon>
        <taxon>Primates</taxon>
        <taxon>Haplorrhini</taxon>
        <taxon>Catarrhini</taxon>
        <taxon>Hominidae</taxon>
        <taxon>Pongo</taxon>
    </lineage>
</organism>
<proteinExistence type="evidence at transcript level"/>
<sequence>MDDKELIEYFKSQMKEDPDMASAVAAIRTLLEFLKRDKGETIQGLRANLTSAIETLCGVDSSVAVSSGGELFLRFISLASLEYSDYSKCKKIMIERGELFLRRISLSRNKIADLCHTFIKDGATILTHAYSRVVLRVLEAAVAAKKRFSVYVTESQPDLSGKKMAKALCHLNVPVTVVLDAAVGYIMEKADLVIVGAEGVVENGGIINKIGTNQMAVCAKAQNKPFYVVAESFKFVRLFPLNQQDVPDKFKYKADTLKVAQTGQDLKEEHPWVDYTAPSLITLLFTDLGVLTPSAVSDELIKLYL</sequence>
<dbReference type="EMBL" id="CR858952">
    <property type="protein sequence ID" value="CAH91150.1"/>
    <property type="status" value="ALT_INIT"/>
    <property type="molecule type" value="mRNA"/>
</dbReference>
<dbReference type="RefSeq" id="NP_001125672.1">
    <property type="nucleotide sequence ID" value="NM_001132200.2"/>
</dbReference>
<dbReference type="RefSeq" id="XP_009246655.1">
    <property type="nucleotide sequence ID" value="XM_009248380.1"/>
</dbReference>
<dbReference type="RefSeq" id="XP_009246656.1">
    <property type="nucleotide sequence ID" value="XM_009248381.1"/>
</dbReference>
<dbReference type="RefSeq" id="XP_009246657.1">
    <property type="nucleotide sequence ID" value="XM_009248382.1"/>
</dbReference>
<dbReference type="SMR" id="Q5RAR0"/>
<dbReference type="FunCoup" id="Q5RAR0">
    <property type="interactions" value="3888"/>
</dbReference>
<dbReference type="STRING" id="9601.ENSPPYP00000005799"/>
<dbReference type="Ensembl" id="ENSPPYT00000052695.1">
    <property type="protein sequence ID" value="ENSPPYP00000039427.1"/>
    <property type="gene ID" value="ENSPPYG00000005092.3"/>
</dbReference>
<dbReference type="GeneID" id="100172592"/>
<dbReference type="KEGG" id="pon:100172592"/>
<dbReference type="CTD" id="1967"/>
<dbReference type="eggNOG" id="KOG1466">
    <property type="taxonomic scope" value="Eukaryota"/>
</dbReference>
<dbReference type="GeneTree" id="ENSGT00550000074853"/>
<dbReference type="HOGENOM" id="CLU_016218_0_2_1"/>
<dbReference type="InParanoid" id="Q5RAR0"/>
<dbReference type="OMA" id="GDWESCK"/>
<dbReference type="OrthoDB" id="10249309at2759"/>
<dbReference type="TreeFam" id="TF101505"/>
<dbReference type="Proteomes" id="UP000001595">
    <property type="component" value="Chromosome 12"/>
</dbReference>
<dbReference type="GO" id="GO:0005829">
    <property type="term" value="C:cytosol"/>
    <property type="evidence" value="ECO:0007669"/>
    <property type="project" value="UniProtKB-SubCell"/>
</dbReference>
<dbReference type="GO" id="GO:0005851">
    <property type="term" value="C:eukaryotic translation initiation factor 2B complex"/>
    <property type="evidence" value="ECO:0000250"/>
    <property type="project" value="UniProtKB"/>
</dbReference>
<dbReference type="GO" id="GO:0005886">
    <property type="term" value="C:plasma membrane"/>
    <property type="evidence" value="ECO:0007669"/>
    <property type="project" value="Ensembl"/>
</dbReference>
<dbReference type="GO" id="GO:0005085">
    <property type="term" value="F:guanyl-nucleotide exchange factor activity"/>
    <property type="evidence" value="ECO:0000250"/>
    <property type="project" value="UniProtKB"/>
</dbReference>
<dbReference type="GO" id="GO:0042802">
    <property type="term" value="F:identical protein binding"/>
    <property type="evidence" value="ECO:0007669"/>
    <property type="project" value="Ensembl"/>
</dbReference>
<dbReference type="GO" id="GO:0003743">
    <property type="term" value="F:translation initiation factor activity"/>
    <property type="evidence" value="ECO:0007669"/>
    <property type="project" value="UniProtKB-KW"/>
</dbReference>
<dbReference type="GO" id="GO:0002183">
    <property type="term" value="P:cytoplasmic translational initiation"/>
    <property type="evidence" value="ECO:0000250"/>
    <property type="project" value="UniProtKB"/>
</dbReference>
<dbReference type="GO" id="GO:0014003">
    <property type="term" value="P:oligodendrocyte development"/>
    <property type="evidence" value="ECO:0007669"/>
    <property type="project" value="Ensembl"/>
</dbReference>
<dbReference type="GO" id="GO:0050852">
    <property type="term" value="P:T cell receptor signaling pathway"/>
    <property type="evidence" value="ECO:0007669"/>
    <property type="project" value="Ensembl"/>
</dbReference>
<dbReference type="FunFam" id="1.20.120.1070:FF:000001">
    <property type="entry name" value="Eukaryotic translation initiation factor 2B subunit alpha"/>
    <property type="match status" value="1"/>
</dbReference>
<dbReference type="FunFam" id="3.40.50.10470:FF:000001">
    <property type="entry name" value="Translation initiation factor eIF-2B subunit alpha"/>
    <property type="match status" value="1"/>
</dbReference>
<dbReference type="Gene3D" id="3.40.50.10470">
    <property type="entry name" value="Translation initiation factor eif-2b, domain 2"/>
    <property type="match status" value="1"/>
</dbReference>
<dbReference type="Gene3D" id="1.20.120.1070">
    <property type="entry name" value="Translation initiation factor eIF-2B, N-terminal domain"/>
    <property type="match status" value="1"/>
</dbReference>
<dbReference type="InterPro" id="IPR051501">
    <property type="entry name" value="eIF2B_alpha/beta/delta"/>
</dbReference>
<dbReference type="InterPro" id="IPR042528">
    <property type="entry name" value="elF-2B_alpha_N"/>
</dbReference>
<dbReference type="InterPro" id="IPR000649">
    <property type="entry name" value="IF-2B-related"/>
</dbReference>
<dbReference type="InterPro" id="IPR042529">
    <property type="entry name" value="IF_2B-like_C"/>
</dbReference>
<dbReference type="InterPro" id="IPR037171">
    <property type="entry name" value="NagB/RpiA_transferase-like"/>
</dbReference>
<dbReference type="PANTHER" id="PTHR45860">
    <property type="entry name" value="TRANSLATION INITIATION FACTOR EIF-2B SUBUNIT ALPHA"/>
    <property type="match status" value="1"/>
</dbReference>
<dbReference type="PANTHER" id="PTHR45860:SF1">
    <property type="entry name" value="TRANSLATION INITIATION FACTOR EIF-2B SUBUNIT ALPHA"/>
    <property type="match status" value="1"/>
</dbReference>
<dbReference type="Pfam" id="PF01008">
    <property type="entry name" value="IF-2B"/>
    <property type="match status" value="1"/>
</dbReference>
<dbReference type="SUPFAM" id="SSF100950">
    <property type="entry name" value="NagB/RpiA/CoA transferase-like"/>
    <property type="match status" value="1"/>
</dbReference>
<feature type="chain" id="PRO_0000284611" description="Translation initiation factor eIF2B subunit alpha">
    <location>
        <begin position="1"/>
        <end position="305"/>
    </location>
</feature>
<feature type="modified residue" description="N6-acetyllysine" evidence="1">
    <location>
        <position position="35"/>
    </location>
</feature>
<name>EI2BA_PONAB</name>
<gene>
    <name type="primary">EIF2B1</name>
</gene>
<accession>Q5RAR0</accession>
<comment type="function">
    <text evidence="1">Acts as a component of the translation initiation factor 2B (eIF2B) complex, which catalyzes the exchange of GDP for GTP on eukaryotic initiation factor 2 (eIF2) gamma subunit. Its guanine nucleotide exchange factor activity is repressed when bound to eIF2 complex phosphorylated on the alpha subunit, thereby limiting the amount of methionyl-initiator methionine tRNA available to the ribosome and consequently global translation is repressed.</text>
</comment>
<comment type="activity regulation">
    <text evidence="1">Activated by the chemical integrated stress response (ISR) inhibitor ISRIB which stimulates guanine nucleotide exchange factor activity for both phosphorylated and unphosphorylated eIF2.</text>
</comment>
<comment type="subunit">
    <text evidence="1">Component of the translation initiation factor 2B (eIF2B) complex which is a heterodecamer of two sets of five different subunits: alpha, beta, gamma, delta and epsilon. Subunits alpha, beta and delta comprise a regulatory subcomplex and subunits epsilon and gamma comprise a catalytic subcomplex. Within the complex, the hexameric regulatory complex resides at the center, with the two heterodimeric catalytic subcomplexes bound on opposite sides.</text>
</comment>
<comment type="subcellular location">
    <subcellularLocation>
        <location evidence="2">Cytoplasm</location>
        <location evidence="2">Cytosol</location>
    </subcellularLocation>
</comment>
<comment type="similarity">
    <text evidence="3">Belongs to the eIF-2B alpha/beta/delta subunits family.</text>
</comment>
<comment type="sequence caution" evidence="3">
    <conflict type="erroneous initiation">
        <sequence resource="EMBL-CDS" id="CAH91150"/>
    </conflict>
</comment>
<protein>
    <recommendedName>
        <fullName>Translation initiation factor eIF2B subunit alpha</fullName>
    </recommendedName>
    <alternativeName>
        <fullName>eIF2B GDP-GTP exchange factor subunit alpha</fullName>
    </alternativeName>
</protein>
<keyword id="KW-0007">Acetylation</keyword>
<keyword id="KW-0963">Cytoplasm</keyword>
<keyword id="KW-0396">Initiation factor</keyword>
<keyword id="KW-0648">Protein biosynthesis</keyword>
<keyword id="KW-1185">Reference proteome</keyword>
<reference key="1">
    <citation type="submission" date="2004-11" db="EMBL/GenBank/DDBJ databases">
        <authorList>
            <consortium name="The German cDNA consortium"/>
        </authorList>
    </citation>
    <scope>NUCLEOTIDE SEQUENCE [LARGE SCALE MRNA]</scope>
    <source>
        <tissue>Kidney</tissue>
    </source>
</reference>